<proteinExistence type="inferred from homology"/>
<geneLocation type="non-photosynthetic plastid"/>
<protein>
    <recommendedName>
        <fullName evidence="1">Photosystem II reaction center protein I</fullName>
        <shortName evidence="1">PSII-I</shortName>
    </recommendedName>
    <alternativeName>
        <fullName evidence="1">PSII 4.8 kDa protein</fullName>
    </alternativeName>
</protein>
<name>PSBI_ANEMR</name>
<feature type="chain" id="PRO_0000353217" description="Photosystem II reaction center protein I">
    <location>
        <begin position="1"/>
        <end position="36"/>
    </location>
</feature>
<feature type="transmembrane region" description="Helical" evidence="1">
    <location>
        <begin position="4"/>
        <end position="24"/>
    </location>
</feature>
<evidence type="ECO:0000255" key="1">
    <source>
        <dbReference type="HAMAP-Rule" id="MF_01316"/>
    </source>
</evidence>
<evidence type="ECO:0000305" key="2"/>
<gene>
    <name evidence="1" type="primary">psbI</name>
</gene>
<dbReference type="EMBL" id="EU043314">
    <property type="protein sequence ID" value="ABS54475.1"/>
    <property type="molecule type" value="Genomic_DNA"/>
</dbReference>
<dbReference type="RefSeq" id="YP_001687214.1">
    <property type="nucleotide sequence ID" value="NC_010359.1"/>
</dbReference>
<dbReference type="SMR" id="B0YPM8"/>
<dbReference type="GeneID" id="5952147"/>
<dbReference type="GO" id="GO:0009539">
    <property type="term" value="C:photosystem II reaction center"/>
    <property type="evidence" value="ECO:0007669"/>
    <property type="project" value="InterPro"/>
</dbReference>
<dbReference type="GO" id="GO:0042170">
    <property type="term" value="C:plastid membrane"/>
    <property type="evidence" value="ECO:0007669"/>
    <property type="project" value="UniProtKB-SubCell"/>
</dbReference>
<dbReference type="GO" id="GO:0042651">
    <property type="term" value="C:thylakoid membrane"/>
    <property type="evidence" value="ECO:0007669"/>
    <property type="project" value="UniProtKB-UniRule"/>
</dbReference>
<dbReference type="HAMAP" id="MF_01316">
    <property type="entry name" value="PSII_PsbI"/>
    <property type="match status" value="1"/>
</dbReference>
<dbReference type="InterPro" id="IPR003686">
    <property type="entry name" value="PSII_PsbI"/>
</dbReference>
<dbReference type="InterPro" id="IPR037271">
    <property type="entry name" value="PSII_PsbI_sf"/>
</dbReference>
<dbReference type="PANTHER" id="PTHR35772">
    <property type="entry name" value="PHOTOSYSTEM II REACTION CENTER PROTEIN I"/>
    <property type="match status" value="1"/>
</dbReference>
<dbReference type="PANTHER" id="PTHR35772:SF1">
    <property type="entry name" value="PHOTOSYSTEM II REACTION CENTER PROTEIN I"/>
    <property type="match status" value="1"/>
</dbReference>
<dbReference type="Pfam" id="PF02532">
    <property type="entry name" value="PsbI"/>
    <property type="match status" value="1"/>
</dbReference>
<dbReference type="SUPFAM" id="SSF161041">
    <property type="entry name" value="Photosystem II reaction center protein I, PsbI"/>
    <property type="match status" value="1"/>
</dbReference>
<comment type="function">
    <text evidence="1">One of the components of the core complex of photosystem II (PSII), required for its stability and/or assembly. PSII is a light-driven water:plastoquinone oxidoreductase that uses light energy to abstract electrons from H(2)O, generating O(2) and a proton gradient subsequently used for ATP formation. It consists of a core antenna complex that captures photons, and an electron transfer chain that converts photonic excitation into a charge separation.</text>
</comment>
<comment type="subunit">
    <text evidence="1">PSII is composed of 1 copy each of membrane proteins PsbA, PsbB, PsbC, PsbD, PsbE, PsbF, PsbH, PsbI, PsbJ, PsbK, PsbL, PsbM, PsbT, PsbX, PsbY, PsbZ, Psb30/Ycf12, at least 3 peripheral proteins of the oxygen-evolving complex and a large number of cofactors. It forms dimeric complexes.</text>
</comment>
<comment type="subcellular location">
    <subcellularLocation>
        <location evidence="2">Plastid membrane</location>
        <topology evidence="1">Single-pass membrane protein</topology>
    </subcellularLocation>
</comment>
<comment type="similarity">
    <text evidence="1">Belongs to the PsbI family.</text>
</comment>
<comment type="caution">
    <text evidence="2">This organism being non-photosynthetic, the role of this protein is uncertain.</text>
</comment>
<keyword id="KW-0472">Membrane</keyword>
<keyword id="KW-0602">Photosynthesis</keyword>
<keyword id="KW-0604">Photosystem II</keyword>
<keyword id="KW-0934">Plastid</keyword>
<keyword id="KW-0674">Reaction center</keyword>
<keyword id="KW-0812">Transmembrane</keyword>
<keyword id="KW-1133">Transmembrane helix</keyword>
<sequence>MPTLKLFVYAIVIFFVSPFVFGFLSNDPGRNPGRKD</sequence>
<organism>
    <name type="scientific">Aneura mirabilis</name>
    <name type="common">Parasitic liverwort</name>
    <name type="synonym">Cryptothallus mirabilis</name>
    <dbReference type="NCBI Taxonomy" id="280810"/>
    <lineage>
        <taxon>Eukaryota</taxon>
        <taxon>Viridiplantae</taxon>
        <taxon>Streptophyta</taxon>
        <taxon>Embryophyta</taxon>
        <taxon>Marchantiophyta</taxon>
        <taxon>Jungermanniopsida</taxon>
        <taxon>Metzgeriidae</taxon>
        <taxon>Metzgeriales</taxon>
        <taxon>Aneuraceae</taxon>
        <taxon>Aneura</taxon>
    </lineage>
</organism>
<accession>B0YPM8</accession>
<reference key="1">
    <citation type="journal article" date="2008" name="Mol. Biol. Evol.">
        <title>Functional gene losses occur with minimal size reduction in the plastid genome of the parasitic liverwort Aneura mirabilis.</title>
        <authorList>
            <person name="Wickett N.J."/>
            <person name="Zhang Y."/>
            <person name="Hansen S.K."/>
            <person name="Roper J.M."/>
            <person name="Kuehl J.V."/>
            <person name="Plock S.A."/>
            <person name="Wolf P.G."/>
            <person name="dePamphilis C.W."/>
            <person name="Boore J.L."/>
            <person name="Goffinet B."/>
        </authorList>
    </citation>
    <scope>NUCLEOTIDE SEQUENCE [LARGE SCALE GENOMIC DNA]</scope>
</reference>